<accession>B0KHU2</accession>
<reference key="1">
    <citation type="submission" date="2008-01" db="EMBL/GenBank/DDBJ databases">
        <title>Complete sequence of Pseudomonas putida GB-1.</title>
        <authorList>
            <consortium name="US DOE Joint Genome Institute"/>
            <person name="Copeland A."/>
            <person name="Lucas S."/>
            <person name="Lapidus A."/>
            <person name="Barry K."/>
            <person name="Glavina del Rio T."/>
            <person name="Dalin E."/>
            <person name="Tice H."/>
            <person name="Pitluck S."/>
            <person name="Bruce D."/>
            <person name="Goodwin L."/>
            <person name="Chertkov O."/>
            <person name="Brettin T."/>
            <person name="Detter J.C."/>
            <person name="Han C."/>
            <person name="Kuske C.R."/>
            <person name="Schmutz J."/>
            <person name="Larimer F."/>
            <person name="Land M."/>
            <person name="Hauser L."/>
            <person name="Kyrpides N."/>
            <person name="Kim E."/>
            <person name="McCarthy J.K."/>
            <person name="Richardson P."/>
        </authorList>
    </citation>
    <scope>NUCLEOTIDE SEQUENCE [LARGE SCALE GENOMIC DNA]</scope>
    <source>
        <strain>GB-1</strain>
    </source>
</reference>
<feature type="chain" id="PRO_1000080639" description="Ketol-acid reductoisomerase (NADP(+))">
    <location>
        <begin position="1"/>
        <end position="338"/>
    </location>
</feature>
<feature type="domain" description="KARI N-terminal Rossmann" evidence="2">
    <location>
        <begin position="1"/>
        <end position="181"/>
    </location>
</feature>
<feature type="domain" description="KARI C-terminal knotted" evidence="3">
    <location>
        <begin position="182"/>
        <end position="327"/>
    </location>
</feature>
<feature type="active site" evidence="1">
    <location>
        <position position="107"/>
    </location>
</feature>
<feature type="binding site" evidence="1">
    <location>
        <begin position="24"/>
        <end position="27"/>
    </location>
    <ligand>
        <name>NADP(+)</name>
        <dbReference type="ChEBI" id="CHEBI:58349"/>
    </ligand>
</feature>
<feature type="binding site" evidence="1">
    <location>
        <position position="47"/>
    </location>
    <ligand>
        <name>NADP(+)</name>
        <dbReference type="ChEBI" id="CHEBI:58349"/>
    </ligand>
</feature>
<feature type="binding site" evidence="1">
    <location>
        <position position="50"/>
    </location>
    <ligand>
        <name>NADP(+)</name>
        <dbReference type="ChEBI" id="CHEBI:58349"/>
    </ligand>
</feature>
<feature type="binding site" evidence="1">
    <location>
        <position position="52"/>
    </location>
    <ligand>
        <name>NADP(+)</name>
        <dbReference type="ChEBI" id="CHEBI:58349"/>
    </ligand>
</feature>
<feature type="binding site" evidence="1">
    <location>
        <begin position="82"/>
        <end position="85"/>
    </location>
    <ligand>
        <name>NADP(+)</name>
        <dbReference type="ChEBI" id="CHEBI:58349"/>
    </ligand>
</feature>
<feature type="binding site" evidence="1">
    <location>
        <position position="133"/>
    </location>
    <ligand>
        <name>NADP(+)</name>
        <dbReference type="ChEBI" id="CHEBI:58349"/>
    </ligand>
</feature>
<feature type="binding site" evidence="1">
    <location>
        <position position="190"/>
    </location>
    <ligand>
        <name>Mg(2+)</name>
        <dbReference type="ChEBI" id="CHEBI:18420"/>
        <label>1</label>
    </ligand>
</feature>
<feature type="binding site" evidence="1">
    <location>
        <position position="190"/>
    </location>
    <ligand>
        <name>Mg(2+)</name>
        <dbReference type="ChEBI" id="CHEBI:18420"/>
        <label>2</label>
    </ligand>
</feature>
<feature type="binding site" evidence="1">
    <location>
        <position position="194"/>
    </location>
    <ligand>
        <name>Mg(2+)</name>
        <dbReference type="ChEBI" id="CHEBI:18420"/>
        <label>1</label>
    </ligand>
</feature>
<feature type="binding site" evidence="1">
    <location>
        <position position="226"/>
    </location>
    <ligand>
        <name>Mg(2+)</name>
        <dbReference type="ChEBI" id="CHEBI:18420"/>
        <label>2</label>
    </ligand>
</feature>
<feature type="binding site" evidence="1">
    <location>
        <position position="230"/>
    </location>
    <ligand>
        <name>Mg(2+)</name>
        <dbReference type="ChEBI" id="CHEBI:18420"/>
        <label>2</label>
    </ligand>
</feature>
<feature type="binding site" evidence="1">
    <location>
        <position position="251"/>
    </location>
    <ligand>
        <name>substrate</name>
    </ligand>
</feature>
<gene>
    <name evidence="1" type="primary">ilvC</name>
    <name type="ordered locus">PputGB1_4676</name>
</gene>
<keyword id="KW-0028">Amino-acid biosynthesis</keyword>
<keyword id="KW-0100">Branched-chain amino acid biosynthesis</keyword>
<keyword id="KW-0460">Magnesium</keyword>
<keyword id="KW-0479">Metal-binding</keyword>
<keyword id="KW-0521">NADP</keyword>
<keyword id="KW-0560">Oxidoreductase</keyword>
<organism>
    <name type="scientific">Pseudomonas putida (strain GB-1)</name>
    <dbReference type="NCBI Taxonomy" id="76869"/>
    <lineage>
        <taxon>Bacteria</taxon>
        <taxon>Pseudomonadati</taxon>
        <taxon>Pseudomonadota</taxon>
        <taxon>Gammaproteobacteria</taxon>
        <taxon>Pseudomonadales</taxon>
        <taxon>Pseudomonadaceae</taxon>
        <taxon>Pseudomonas</taxon>
    </lineage>
</organism>
<sequence>MKVFYDKDCDLSIIQGKKVAIIGYGSQGHAQACNLKDSGVDVTVGLRKGSATVAKAEAHGLKVADVATAVAAADLVMILTPDEFQGALYKNEIEPNIKKGATLAFSHGFSIHYNQVVPRADLDVIMIAPKAPGHTVRSEFVKGGGIPDLIAIYQDASGNAKNVALSYASGVGGGRTGIIETTFKDETETDLFGEQAVLCGGTVELVKAGFETLVEAGYAPEMAYFECLHELKLIVDLMYEGGIANMNYSISNNAEYGEYVTGPEVINEESRKAMRNALKRIQDGEYAKMFISEGATNYPSMTAKRRNNAAHGIEIIGEQLRSMMPWISANKIVDKTKN</sequence>
<name>ILVC_PSEPG</name>
<protein>
    <recommendedName>
        <fullName evidence="1">Ketol-acid reductoisomerase (NADP(+))</fullName>
        <shortName evidence="1">KARI</shortName>
        <ecNumber evidence="1">1.1.1.86</ecNumber>
    </recommendedName>
    <alternativeName>
        <fullName evidence="1">Acetohydroxy-acid isomeroreductase</fullName>
        <shortName evidence="1">AHIR</shortName>
    </alternativeName>
    <alternativeName>
        <fullName evidence="1">Alpha-keto-beta-hydroxylacyl reductoisomerase</fullName>
    </alternativeName>
    <alternativeName>
        <fullName evidence="1">Ketol-acid reductoisomerase type 1</fullName>
    </alternativeName>
    <alternativeName>
        <fullName evidence="1">Ketol-acid reductoisomerase type I</fullName>
    </alternativeName>
</protein>
<dbReference type="EC" id="1.1.1.86" evidence="1"/>
<dbReference type="EMBL" id="CP000926">
    <property type="protein sequence ID" value="ABZ00563.1"/>
    <property type="molecule type" value="Genomic_DNA"/>
</dbReference>
<dbReference type="RefSeq" id="WP_003250043.1">
    <property type="nucleotide sequence ID" value="NC_010322.1"/>
</dbReference>
<dbReference type="SMR" id="B0KHU2"/>
<dbReference type="GeneID" id="83682391"/>
<dbReference type="KEGG" id="ppg:PputGB1_4676"/>
<dbReference type="eggNOG" id="COG0059">
    <property type="taxonomic scope" value="Bacteria"/>
</dbReference>
<dbReference type="HOGENOM" id="CLU_033821_0_1_6"/>
<dbReference type="UniPathway" id="UPA00047">
    <property type="reaction ID" value="UER00056"/>
</dbReference>
<dbReference type="UniPathway" id="UPA00049">
    <property type="reaction ID" value="UER00060"/>
</dbReference>
<dbReference type="Proteomes" id="UP000002157">
    <property type="component" value="Chromosome"/>
</dbReference>
<dbReference type="GO" id="GO:0005829">
    <property type="term" value="C:cytosol"/>
    <property type="evidence" value="ECO:0007669"/>
    <property type="project" value="TreeGrafter"/>
</dbReference>
<dbReference type="GO" id="GO:0004455">
    <property type="term" value="F:ketol-acid reductoisomerase activity"/>
    <property type="evidence" value="ECO:0007669"/>
    <property type="project" value="UniProtKB-UniRule"/>
</dbReference>
<dbReference type="GO" id="GO:0000287">
    <property type="term" value="F:magnesium ion binding"/>
    <property type="evidence" value="ECO:0007669"/>
    <property type="project" value="UniProtKB-UniRule"/>
</dbReference>
<dbReference type="GO" id="GO:0050661">
    <property type="term" value="F:NADP binding"/>
    <property type="evidence" value="ECO:0007669"/>
    <property type="project" value="InterPro"/>
</dbReference>
<dbReference type="GO" id="GO:0009097">
    <property type="term" value="P:isoleucine biosynthetic process"/>
    <property type="evidence" value="ECO:0007669"/>
    <property type="project" value="UniProtKB-UniRule"/>
</dbReference>
<dbReference type="GO" id="GO:0009099">
    <property type="term" value="P:L-valine biosynthetic process"/>
    <property type="evidence" value="ECO:0007669"/>
    <property type="project" value="UniProtKB-UniRule"/>
</dbReference>
<dbReference type="FunFam" id="3.40.50.720:FF:000023">
    <property type="entry name" value="Ketol-acid reductoisomerase (NADP(+))"/>
    <property type="match status" value="1"/>
</dbReference>
<dbReference type="Gene3D" id="6.10.240.10">
    <property type="match status" value="1"/>
</dbReference>
<dbReference type="Gene3D" id="3.40.50.720">
    <property type="entry name" value="NAD(P)-binding Rossmann-like Domain"/>
    <property type="match status" value="1"/>
</dbReference>
<dbReference type="HAMAP" id="MF_00435">
    <property type="entry name" value="IlvC"/>
    <property type="match status" value="1"/>
</dbReference>
<dbReference type="InterPro" id="IPR008927">
    <property type="entry name" value="6-PGluconate_DH-like_C_sf"/>
</dbReference>
<dbReference type="InterPro" id="IPR013023">
    <property type="entry name" value="KARI"/>
</dbReference>
<dbReference type="InterPro" id="IPR000506">
    <property type="entry name" value="KARI_C"/>
</dbReference>
<dbReference type="InterPro" id="IPR013116">
    <property type="entry name" value="KARI_N"/>
</dbReference>
<dbReference type="InterPro" id="IPR014359">
    <property type="entry name" value="KARI_prok"/>
</dbReference>
<dbReference type="InterPro" id="IPR036291">
    <property type="entry name" value="NAD(P)-bd_dom_sf"/>
</dbReference>
<dbReference type="NCBIfam" id="TIGR00465">
    <property type="entry name" value="ilvC"/>
    <property type="match status" value="1"/>
</dbReference>
<dbReference type="NCBIfam" id="NF004017">
    <property type="entry name" value="PRK05479.1"/>
    <property type="match status" value="1"/>
</dbReference>
<dbReference type="NCBIfam" id="NF009940">
    <property type="entry name" value="PRK13403.1"/>
    <property type="match status" value="1"/>
</dbReference>
<dbReference type="PANTHER" id="PTHR21371">
    <property type="entry name" value="KETOL-ACID REDUCTOISOMERASE, MITOCHONDRIAL"/>
    <property type="match status" value="1"/>
</dbReference>
<dbReference type="PANTHER" id="PTHR21371:SF1">
    <property type="entry name" value="KETOL-ACID REDUCTOISOMERASE, MITOCHONDRIAL"/>
    <property type="match status" value="1"/>
</dbReference>
<dbReference type="Pfam" id="PF01450">
    <property type="entry name" value="KARI_C"/>
    <property type="match status" value="1"/>
</dbReference>
<dbReference type="Pfam" id="PF07991">
    <property type="entry name" value="KARI_N"/>
    <property type="match status" value="1"/>
</dbReference>
<dbReference type="PIRSF" id="PIRSF000116">
    <property type="entry name" value="IlvC_gammaproteo"/>
    <property type="match status" value="1"/>
</dbReference>
<dbReference type="SUPFAM" id="SSF48179">
    <property type="entry name" value="6-phosphogluconate dehydrogenase C-terminal domain-like"/>
    <property type="match status" value="1"/>
</dbReference>
<dbReference type="SUPFAM" id="SSF51735">
    <property type="entry name" value="NAD(P)-binding Rossmann-fold domains"/>
    <property type="match status" value="1"/>
</dbReference>
<dbReference type="PROSITE" id="PS51851">
    <property type="entry name" value="KARI_C"/>
    <property type="match status" value="1"/>
</dbReference>
<dbReference type="PROSITE" id="PS51850">
    <property type="entry name" value="KARI_N"/>
    <property type="match status" value="1"/>
</dbReference>
<comment type="function">
    <text evidence="1">Involved in the biosynthesis of branched-chain amino acids (BCAA). Catalyzes an alkyl-migration followed by a ketol-acid reduction of (S)-2-acetolactate (S2AL) to yield (R)-2,3-dihydroxy-isovalerate. In the isomerase reaction, S2AL is rearranged via a Mg-dependent methyl migration to produce 3-hydroxy-3-methyl-2-ketobutyrate (HMKB). In the reductase reaction, this 2-ketoacid undergoes a metal-dependent reduction by NADPH to yield (R)-2,3-dihydroxy-isovalerate.</text>
</comment>
<comment type="catalytic activity">
    <reaction evidence="1">
        <text>(2R)-2,3-dihydroxy-3-methylbutanoate + NADP(+) = (2S)-2-acetolactate + NADPH + H(+)</text>
        <dbReference type="Rhea" id="RHEA:22068"/>
        <dbReference type="ChEBI" id="CHEBI:15378"/>
        <dbReference type="ChEBI" id="CHEBI:49072"/>
        <dbReference type="ChEBI" id="CHEBI:57783"/>
        <dbReference type="ChEBI" id="CHEBI:58349"/>
        <dbReference type="ChEBI" id="CHEBI:58476"/>
        <dbReference type="EC" id="1.1.1.86"/>
    </reaction>
</comment>
<comment type="catalytic activity">
    <reaction evidence="1">
        <text>(2R,3R)-2,3-dihydroxy-3-methylpentanoate + NADP(+) = (S)-2-ethyl-2-hydroxy-3-oxobutanoate + NADPH + H(+)</text>
        <dbReference type="Rhea" id="RHEA:13493"/>
        <dbReference type="ChEBI" id="CHEBI:15378"/>
        <dbReference type="ChEBI" id="CHEBI:49256"/>
        <dbReference type="ChEBI" id="CHEBI:49258"/>
        <dbReference type="ChEBI" id="CHEBI:57783"/>
        <dbReference type="ChEBI" id="CHEBI:58349"/>
        <dbReference type="EC" id="1.1.1.86"/>
    </reaction>
</comment>
<comment type="cofactor">
    <cofactor evidence="1">
        <name>Mg(2+)</name>
        <dbReference type="ChEBI" id="CHEBI:18420"/>
    </cofactor>
    <text evidence="1">Binds 2 magnesium ions per subunit.</text>
</comment>
<comment type="pathway">
    <text evidence="1">Amino-acid biosynthesis; L-isoleucine biosynthesis; L-isoleucine from 2-oxobutanoate: step 2/4.</text>
</comment>
<comment type="pathway">
    <text evidence="1">Amino-acid biosynthesis; L-valine biosynthesis; L-valine from pyruvate: step 2/4.</text>
</comment>
<comment type="similarity">
    <text evidence="1">Belongs to the ketol-acid reductoisomerase family.</text>
</comment>
<proteinExistence type="inferred from homology"/>
<evidence type="ECO:0000255" key="1">
    <source>
        <dbReference type="HAMAP-Rule" id="MF_00435"/>
    </source>
</evidence>
<evidence type="ECO:0000255" key="2">
    <source>
        <dbReference type="PROSITE-ProRule" id="PRU01197"/>
    </source>
</evidence>
<evidence type="ECO:0000255" key="3">
    <source>
        <dbReference type="PROSITE-ProRule" id="PRU01198"/>
    </source>
</evidence>